<gene>
    <name evidence="2" type="primary">tuf</name>
    <name type="ordered locus">BF4199</name>
</gene>
<reference key="1">
    <citation type="journal article" date="1990" name="Arch. Microbiol.">
        <title>Complete nucleotide sequences of seven eubacterial genes coding for the elongation factor Tu: functional, structural and phylogenetic evaluations.</title>
        <authorList>
            <person name="Ludwig W."/>
            <person name="Weizenegger M."/>
            <person name="Betzl D."/>
            <person name="Leidel E."/>
            <person name="Lenz T."/>
            <person name="Ludvigsen A."/>
            <person name="Moellenhoff D."/>
            <person name="Wenzig P."/>
            <person name="Schleifer K.H."/>
        </authorList>
    </citation>
    <scope>NUCLEOTIDE SEQUENCE [GENOMIC DNA]</scope>
</reference>
<reference key="2">
    <citation type="journal article" date="2004" name="Proc. Natl. Acad. Sci. U.S.A.">
        <title>Genomic analysis of Bacteroides fragilis reveals extensive DNA inversions regulating cell surface adaptation.</title>
        <authorList>
            <person name="Kuwahara T."/>
            <person name="Yamashita A."/>
            <person name="Hirakawa H."/>
            <person name="Nakayama H."/>
            <person name="Toh H."/>
            <person name="Okada N."/>
            <person name="Kuhara S."/>
            <person name="Hattori M."/>
            <person name="Hayashi T."/>
            <person name="Ohnishi Y."/>
        </authorList>
    </citation>
    <scope>NUCLEOTIDE SEQUENCE [LARGE SCALE GENOMIC DNA]</scope>
    <source>
        <strain>YCH46</strain>
    </source>
</reference>
<name>EFTU_BACFR</name>
<dbReference type="EC" id="3.6.5.3" evidence="2"/>
<dbReference type="EMBL" id="AP006841">
    <property type="protein sequence ID" value="BAD50942.1"/>
    <property type="molecule type" value="Genomic_DNA"/>
</dbReference>
<dbReference type="PIR" id="B60663">
    <property type="entry name" value="B60663"/>
</dbReference>
<dbReference type="RefSeq" id="WP_005782155.1">
    <property type="nucleotide sequence ID" value="NZ_UYXF01000007.1"/>
</dbReference>
<dbReference type="RefSeq" id="YP_101476.1">
    <property type="nucleotide sequence ID" value="NC_006347.1"/>
</dbReference>
<dbReference type="SMR" id="P33165"/>
<dbReference type="STRING" id="295405.BF4199"/>
<dbReference type="GeneID" id="93105343"/>
<dbReference type="KEGG" id="bfr:BF4199"/>
<dbReference type="PATRIC" id="fig|295405.11.peg.4054"/>
<dbReference type="HOGENOM" id="CLU_007265_0_0_10"/>
<dbReference type="OrthoDB" id="9804504at2"/>
<dbReference type="Proteomes" id="UP000002197">
    <property type="component" value="Chromosome"/>
</dbReference>
<dbReference type="GO" id="GO:0005829">
    <property type="term" value="C:cytosol"/>
    <property type="evidence" value="ECO:0007669"/>
    <property type="project" value="TreeGrafter"/>
</dbReference>
<dbReference type="GO" id="GO:0005525">
    <property type="term" value="F:GTP binding"/>
    <property type="evidence" value="ECO:0007669"/>
    <property type="project" value="UniProtKB-UniRule"/>
</dbReference>
<dbReference type="GO" id="GO:0003924">
    <property type="term" value="F:GTPase activity"/>
    <property type="evidence" value="ECO:0007669"/>
    <property type="project" value="InterPro"/>
</dbReference>
<dbReference type="GO" id="GO:0003746">
    <property type="term" value="F:translation elongation factor activity"/>
    <property type="evidence" value="ECO:0007669"/>
    <property type="project" value="UniProtKB-UniRule"/>
</dbReference>
<dbReference type="CDD" id="cd01884">
    <property type="entry name" value="EF_Tu"/>
    <property type="match status" value="1"/>
</dbReference>
<dbReference type="CDD" id="cd03697">
    <property type="entry name" value="EFTU_II"/>
    <property type="match status" value="1"/>
</dbReference>
<dbReference type="CDD" id="cd03707">
    <property type="entry name" value="EFTU_III"/>
    <property type="match status" value="1"/>
</dbReference>
<dbReference type="FunFam" id="2.40.30.10:FF:000002">
    <property type="entry name" value="Elongation factor Tu"/>
    <property type="match status" value="1"/>
</dbReference>
<dbReference type="FunFam" id="3.40.50.300:FF:000003">
    <property type="entry name" value="Elongation factor Tu"/>
    <property type="match status" value="1"/>
</dbReference>
<dbReference type="FunFam" id="2.40.30.10:FF:000020">
    <property type="entry name" value="Translation elongation factor EF-1"/>
    <property type="match status" value="1"/>
</dbReference>
<dbReference type="Gene3D" id="3.40.50.300">
    <property type="entry name" value="P-loop containing nucleotide triphosphate hydrolases"/>
    <property type="match status" value="1"/>
</dbReference>
<dbReference type="Gene3D" id="2.40.30.10">
    <property type="entry name" value="Translation factors"/>
    <property type="match status" value="2"/>
</dbReference>
<dbReference type="HAMAP" id="MF_00118_B">
    <property type="entry name" value="EF_Tu_B"/>
    <property type="match status" value="1"/>
</dbReference>
<dbReference type="InterPro" id="IPR041709">
    <property type="entry name" value="EF-Tu_GTP-bd"/>
</dbReference>
<dbReference type="InterPro" id="IPR050055">
    <property type="entry name" value="EF-Tu_GTPase"/>
</dbReference>
<dbReference type="InterPro" id="IPR004161">
    <property type="entry name" value="EFTu-like_2"/>
</dbReference>
<dbReference type="InterPro" id="IPR033720">
    <property type="entry name" value="EFTU_2"/>
</dbReference>
<dbReference type="InterPro" id="IPR031157">
    <property type="entry name" value="G_TR_CS"/>
</dbReference>
<dbReference type="InterPro" id="IPR027417">
    <property type="entry name" value="P-loop_NTPase"/>
</dbReference>
<dbReference type="InterPro" id="IPR005225">
    <property type="entry name" value="Small_GTP-bd"/>
</dbReference>
<dbReference type="InterPro" id="IPR000795">
    <property type="entry name" value="T_Tr_GTP-bd_dom"/>
</dbReference>
<dbReference type="InterPro" id="IPR009000">
    <property type="entry name" value="Transl_B-barrel_sf"/>
</dbReference>
<dbReference type="InterPro" id="IPR009001">
    <property type="entry name" value="Transl_elong_EF1A/Init_IF2_C"/>
</dbReference>
<dbReference type="InterPro" id="IPR004541">
    <property type="entry name" value="Transl_elong_EFTu/EF1A_bac/org"/>
</dbReference>
<dbReference type="InterPro" id="IPR004160">
    <property type="entry name" value="Transl_elong_EFTu/EF1A_C"/>
</dbReference>
<dbReference type="NCBIfam" id="TIGR00485">
    <property type="entry name" value="EF-Tu"/>
    <property type="match status" value="1"/>
</dbReference>
<dbReference type="NCBIfam" id="NF000766">
    <property type="entry name" value="PRK00049.1"/>
    <property type="match status" value="1"/>
</dbReference>
<dbReference type="NCBIfam" id="NF009372">
    <property type="entry name" value="PRK12735.1"/>
    <property type="match status" value="1"/>
</dbReference>
<dbReference type="NCBIfam" id="NF009373">
    <property type="entry name" value="PRK12736.1"/>
    <property type="match status" value="1"/>
</dbReference>
<dbReference type="NCBIfam" id="TIGR00231">
    <property type="entry name" value="small_GTP"/>
    <property type="match status" value="1"/>
</dbReference>
<dbReference type="PANTHER" id="PTHR43721:SF22">
    <property type="entry name" value="ELONGATION FACTOR TU, MITOCHONDRIAL"/>
    <property type="match status" value="1"/>
</dbReference>
<dbReference type="PANTHER" id="PTHR43721">
    <property type="entry name" value="ELONGATION FACTOR TU-RELATED"/>
    <property type="match status" value="1"/>
</dbReference>
<dbReference type="Pfam" id="PF00009">
    <property type="entry name" value="GTP_EFTU"/>
    <property type="match status" value="1"/>
</dbReference>
<dbReference type="Pfam" id="PF03144">
    <property type="entry name" value="GTP_EFTU_D2"/>
    <property type="match status" value="1"/>
</dbReference>
<dbReference type="Pfam" id="PF03143">
    <property type="entry name" value="GTP_EFTU_D3"/>
    <property type="match status" value="1"/>
</dbReference>
<dbReference type="PRINTS" id="PR00315">
    <property type="entry name" value="ELONGATNFCT"/>
</dbReference>
<dbReference type="SUPFAM" id="SSF50465">
    <property type="entry name" value="EF-Tu/eEF-1alpha/eIF2-gamma C-terminal domain"/>
    <property type="match status" value="1"/>
</dbReference>
<dbReference type="SUPFAM" id="SSF52540">
    <property type="entry name" value="P-loop containing nucleoside triphosphate hydrolases"/>
    <property type="match status" value="1"/>
</dbReference>
<dbReference type="SUPFAM" id="SSF50447">
    <property type="entry name" value="Translation proteins"/>
    <property type="match status" value="1"/>
</dbReference>
<dbReference type="PROSITE" id="PS00301">
    <property type="entry name" value="G_TR_1"/>
    <property type="match status" value="1"/>
</dbReference>
<dbReference type="PROSITE" id="PS51722">
    <property type="entry name" value="G_TR_2"/>
    <property type="match status" value="1"/>
</dbReference>
<feature type="chain" id="PRO_0000091288" description="Elongation factor Tu">
    <location>
        <begin position="1"/>
        <end position="394"/>
    </location>
</feature>
<feature type="domain" description="tr-type G">
    <location>
        <begin position="10"/>
        <end position="205"/>
    </location>
</feature>
<feature type="region of interest" description="G1" evidence="1">
    <location>
        <begin position="19"/>
        <end position="26"/>
    </location>
</feature>
<feature type="region of interest" description="G2" evidence="1">
    <location>
        <begin position="60"/>
        <end position="64"/>
    </location>
</feature>
<feature type="region of interest" description="G3" evidence="1">
    <location>
        <begin position="81"/>
        <end position="84"/>
    </location>
</feature>
<feature type="region of interest" description="G4" evidence="1">
    <location>
        <begin position="136"/>
        <end position="139"/>
    </location>
</feature>
<feature type="region of interest" description="G5" evidence="1">
    <location>
        <begin position="174"/>
        <end position="176"/>
    </location>
</feature>
<feature type="binding site" evidence="2">
    <location>
        <begin position="19"/>
        <end position="26"/>
    </location>
    <ligand>
        <name>GTP</name>
        <dbReference type="ChEBI" id="CHEBI:37565"/>
    </ligand>
</feature>
<feature type="binding site" evidence="2">
    <location>
        <position position="26"/>
    </location>
    <ligand>
        <name>Mg(2+)</name>
        <dbReference type="ChEBI" id="CHEBI:18420"/>
    </ligand>
</feature>
<feature type="binding site" evidence="2">
    <location>
        <begin position="81"/>
        <end position="85"/>
    </location>
    <ligand>
        <name>GTP</name>
        <dbReference type="ChEBI" id="CHEBI:37565"/>
    </ligand>
</feature>
<feature type="binding site" evidence="2">
    <location>
        <begin position="136"/>
        <end position="139"/>
    </location>
    <ligand>
        <name>GTP</name>
        <dbReference type="ChEBI" id="CHEBI:37565"/>
    </ligand>
</feature>
<comment type="function">
    <text evidence="2">GTP hydrolase that promotes the GTP-dependent binding of aminoacyl-tRNA to the A-site of ribosomes during protein biosynthesis.</text>
</comment>
<comment type="catalytic activity">
    <reaction evidence="2">
        <text>GTP + H2O = GDP + phosphate + H(+)</text>
        <dbReference type="Rhea" id="RHEA:19669"/>
        <dbReference type="ChEBI" id="CHEBI:15377"/>
        <dbReference type="ChEBI" id="CHEBI:15378"/>
        <dbReference type="ChEBI" id="CHEBI:37565"/>
        <dbReference type="ChEBI" id="CHEBI:43474"/>
        <dbReference type="ChEBI" id="CHEBI:58189"/>
        <dbReference type="EC" id="3.6.5.3"/>
    </reaction>
    <physiologicalReaction direction="left-to-right" evidence="2">
        <dbReference type="Rhea" id="RHEA:19670"/>
    </physiologicalReaction>
</comment>
<comment type="subunit">
    <text evidence="2">Monomer.</text>
</comment>
<comment type="subcellular location">
    <subcellularLocation>
        <location evidence="2">Cytoplasm</location>
    </subcellularLocation>
</comment>
<comment type="similarity">
    <text evidence="2">Belongs to the TRAFAC class translation factor GTPase superfamily. Classic translation factor GTPase family. EF-Tu/EF-1A subfamily.</text>
</comment>
<organism>
    <name type="scientific">Bacteroides fragilis (strain YCH46)</name>
    <dbReference type="NCBI Taxonomy" id="295405"/>
    <lineage>
        <taxon>Bacteria</taxon>
        <taxon>Pseudomonadati</taxon>
        <taxon>Bacteroidota</taxon>
        <taxon>Bacteroidia</taxon>
        <taxon>Bacteroidales</taxon>
        <taxon>Bacteroidaceae</taxon>
        <taxon>Bacteroides</taxon>
    </lineage>
</organism>
<protein>
    <recommendedName>
        <fullName evidence="2">Elongation factor Tu</fullName>
        <shortName evidence="2">EF-Tu</shortName>
        <ecNumber evidence="2">3.6.5.3</ecNumber>
    </recommendedName>
</protein>
<evidence type="ECO:0000250" key="1"/>
<evidence type="ECO:0000255" key="2">
    <source>
        <dbReference type="HAMAP-Rule" id="MF_00118"/>
    </source>
</evidence>
<accession>P33165</accession>
<sequence>MAKEKFERTKPHVNIGTIGHVDHGKTTLTAAITTVLAKKGLSELRSFDSIDNAPEEKERGITINTSHVEYETANRHYAHVDCPGHADYVKNMVTGAAQMDGAIIVVAATDGPMPQTREHILLARQVNVPKLVVFMNKCDMVEDAEMLELVEMEMRELLSFYDFDGDNTPIIQGSALGALNGVEKWEDKVMELMEAVDTWIPLPPRDVDKPFLMPVEDVFSITGRGTVATGRIETGVIHVGDEIEILGLGEDKKSVVTGVEMFRKLLDQGEAGDNVGLLLRGVDKNEIKRGMVLCKPGQIKPHSKFKAEVYILKKEEGGRHTPFHNKYRPQFYLRTMDCTGEITLPEGTEMVMPGDNVTITVELIYPVALNIGLRFAIREGGRTVGAGQITEIID</sequence>
<proteinExistence type="inferred from homology"/>
<keyword id="KW-0963">Cytoplasm</keyword>
<keyword id="KW-0251">Elongation factor</keyword>
<keyword id="KW-0342">GTP-binding</keyword>
<keyword id="KW-0378">Hydrolase</keyword>
<keyword id="KW-0460">Magnesium</keyword>
<keyword id="KW-0479">Metal-binding</keyword>
<keyword id="KW-0547">Nucleotide-binding</keyword>
<keyword id="KW-0648">Protein biosynthesis</keyword>